<feature type="chain" id="PRO_0000317747" description="TOMM20-like protein 1">
    <location>
        <begin position="1"/>
        <end position="152"/>
    </location>
</feature>
<feature type="topological domain" description="Mitochondrial intermembrane" evidence="1">
    <location>
        <begin position="1"/>
        <end position="9"/>
    </location>
</feature>
<feature type="transmembrane region" description="Helical" evidence="1">
    <location>
        <begin position="10"/>
        <end position="29"/>
    </location>
</feature>
<feature type="topological domain" description="Cytoplasmic" evidence="1">
    <location>
        <begin position="30"/>
        <end position="152"/>
    </location>
</feature>
<feature type="region of interest" description="Disordered" evidence="2">
    <location>
        <begin position="43"/>
        <end position="62"/>
    </location>
</feature>
<feature type="compositionally biased region" description="Basic and acidic residues" evidence="2">
    <location>
        <begin position="47"/>
        <end position="56"/>
    </location>
</feature>
<evidence type="ECO:0000255" key="1"/>
<evidence type="ECO:0000256" key="2">
    <source>
        <dbReference type="SAM" id="MobiDB-lite"/>
    </source>
</evidence>
<evidence type="ECO:0000305" key="3"/>
<sequence>MPSVRSLLRLLAAAAACGAFAFLGYCIYLNRKRRGDPAFKRRLRDKRRAEPQKAEEQGTQLWDPTKNKKLQELFLQEVRMGELWLSRGEHRMGIQHLGNALLVCEQPRELLKVFKHTLPPKVFEMLLHKIPLICQQFEADMNEQDCLEDDPD</sequence>
<dbReference type="EMBL" id="AY358266">
    <property type="protein sequence ID" value="AAQ88633.1"/>
    <property type="molecule type" value="mRNA"/>
</dbReference>
<dbReference type="EMBL" id="CH471061">
    <property type="protein sequence ID" value="EAW80733.1"/>
    <property type="molecule type" value="Genomic_DNA"/>
</dbReference>
<dbReference type="EMBL" id="BC137557">
    <property type="protein sequence ID" value="AAI37558.1"/>
    <property type="molecule type" value="mRNA"/>
</dbReference>
<dbReference type="EMBL" id="BC137563">
    <property type="protein sequence ID" value="AAI37564.1"/>
    <property type="molecule type" value="mRNA"/>
</dbReference>
<dbReference type="CCDS" id="CCDS9734.1"/>
<dbReference type="RefSeq" id="NP_997260.1">
    <property type="nucleotide sequence ID" value="NM_207377.3"/>
</dbReference>
<dbReference type="SMR" id="Q6UXN7"/>
<dbReference type="BioGRID" id="132529">
    <property type="interactions" value="46"/>
</dbReference>
<dbReference type="FunCoup" id="Q6UXN7">
    <property type="interactions" value="13"/>
</dbReference>
<dbReference type="IntAct" id="Q6UXN7">
    <property type="interactions" value="6"/>
</dbReference>
<dbReference type="STRING" id="9606.ENSP00000354204"/>
<dbReference type="BioMuta" id="TOMM20L"/>
<dbReference type="DMDM" id="74738230"/>
<dbReference type="MassIVE" id="Q6UXN7"/>
<dbReference type="PaxDb" id="9606-ENSP00000354204"/>
<dbReference type="PeptideAtlas" id="Q6UXN7"/>
<dbReference type="ProteomicsDB" id="67639"/>
<dbReference type="Antibodypedia" id="51460">
    <property type="antibodies" value="65 antibodies from 15 providers"/>
</dbReference>
<dbReference type="DNASU" id="387990"/>
<dbReference type="Ensembl" id="ENST00000360945.7">
    <property type="protein sequence ID" value="ENSP00000354204.2"/>
    <property type="gene ID" value="ENSG00000196860.8"/>
</dbReference>
<dbReference type="GeneID" id="387990"/>
<dbReference type="KEGG" id="hsa:387990"/>
<dbReference type="MANE-Select" id="ENST00000360945.7">
    <property type="protein sequence ID" value="ENSP00000354204.2"/>
    <property type="RefSeq nucleotide sequence ID" value="NM_207377.3"/>
    <property type="RefSeq protein sequence ID" value="NP_997260.1"/>
</dbReference>
<dbReference type="UCSC" id="uc001xdr.2">
    <property type="organism name" value="human"/>
</dbReference>
<dbReference type="AGR" id="HGNC:33752"/>
<dbReference type="CTD" id="387990"/>
<dbReference type="GeneCards" id="TOMM20L"/>
<dbReference type="HGNC" id="HGNC:33752">
    <property type="gene designation" value="TOMM20L"/>
</dbReference>
<dbReference type="HPA" id="ENSG00000196860">
    <property type="expression patterns" value="Tissue enriched (testis)"/>
</dbReference>
<dbReference type="neXtProt" id="NX_Q6UXN7"/>
<dbReference type="OpenTargets" id="ENSG00000196860"/>
<dbReference type="PharmGKB" id="PA162406689"/>
<dbReference type="VEuPathDB" id="HostDB:ENSG00000196860"/>
<dbReference type="eggNOG" id="KOG4056">
    <property type="taxonomic scope" value="Eukaryota"/>
</dbReference>
<dbReference type="GeneTree" id="ENSGT00390000011698"/>
<dbReference type="HOGENOM" id="CLU_100000_2_0_1"/>
<dbReference type="InParanoid" id="Q6UXN7"/>
<dbReference type="OMA" id="MQEIHKG"/>
<dbReference type="OrthoDB" id="2154253at2759"/>
<dbReference type="PAN-GO" id="Q6UXN7">
    <property type="GO annotations" value="6 GO annotations based on evolutionary models"/>
</dbReference>
<dbReference type="PhylomeDB" id="Q6UXN7"/>
<dbReference type="TreeFam" id="TF106200"/>
<dbReference type="PathwayCommons" id="Q6UXN7"/>
<dbReference type="SignaLink" id="Q6UXN7"/>
<dbReference type="BioGRID-ORCS" id="387990">
    <property type="hits" value="15 hits in 1144 CRISPR screens"/>
</dbReference>
<dbReference type="GenomeRNAi" id="387990"/>
<dbReference type="Pharos" id="Q6UXN7">
    <property type="development level" value="Tdark"/>
</dbReference>
<dbReference type="PRO" id="PR:Q6UXN7"/>
<dbReference type="Proteomes" id="UP000005640">
    <property type="component" value="Chromosome 14"/>
</dbReference>
<dbReference type="RNAct" id="Q6UXN7">
    <property type="molecule type" value="protein"/>
</dbReference>
<dbReference type="Bgee" id="ENSG00000196860">
    <property type="expression patterns" value="Expressed in male germ line stem cell (sensu Vertebrata) in testis and 100 other cell types or tissues"/>
</dbReference>
<dbReference type="ExpressionAtlas" id="Q6UXN7">
    <property type="expression patterns" value="baseline and differential"/>
</dbReference>
<dbReference type="GO" id="GO:0005742">
    <property type="term" value="C:mitochondrial outer membrane translocase complex"/>
    <property type="evidence" value="ECO:0000318"/>
    <property type="project" value="GO_Central"/>
</dbReference>
<dbReference type="GO" id="GO:0030943">
    <property type="term" value="F:mitochondrion targeting sequence binding"/>
    <property type="evidence" value="ECO:0000318"/>
    <property type="project" value="GO_Central"/>
</dbReference>
<dbReference type="GO" id="GO:0006886">
    <property type="term" value="P:intracellular protein transport"/>
    <property type="evidence" value="ECO:0007669"/>
    <property type="project" value="InterPro"/>
</dbReference>
<dbReference type="GO" id="GO:0030150">
    <property type="term" value="P:protein import into mitochondrial matrix"/>
    <property type="evidence" value="ECO:0000318"/>
    <property type="project" value="GO_Central"/>
</dbReference>
<dbReference type="GO" id="GO:0016031">
    <property type="term" value="P:tRNA import into mitochondrion"/>
    <property type="evidence" value="ECO:0000318"/>
    <property type="project" value="GO_Central"/>
</dbReference>
<dbReference type="FunFam" id="1.20.960.10:FF:000003">
    <property type="entry name" value="Translocase of outer mitochondrial membrane 20 like"/>
    <property type="match status" value="1"/>
</dbReference>
<dbReference type="Gene3D" id="1.20.960.10">
    <property type="entry name" value="Mitochondrial outer membrane translocase complex, subunit Tom20 domain"/>
    <property type="match status" value="1"/>
</dbReference>
<dbReference type="InterPro" id="IPR002056">
    <property type="entry name" value="MAS20"/>
</dbReference>
<dbReference type="InterPro" id="IPR022422">
    <property type="entry name" value="MAS20_rcpt_metazoan"/>
</dbReference>
<dbReference type="InterPro" id="IPR023392">
    <property type="entry name" value="Tom20_dom_sf"/>
</dbReference>
<dbReference type="PANTHER" id="PTHR12430">
    <property type="entry name" value="MITOCHONDRIAL IMPORT RECEPTOR SUBUNIT TOM20"/>
    <property type="match status" value="1"/>
</dbReference>
<dbReference type="PANTHER" id="PTHR12430:SF1">
    <property type="entry name" value="TOMM20-LIKE PROTEIN 1"/>
    <property type="match status" value="1"/>
</dbReference>
<dbReference type="Pfam" id="PF02064">
    <property type="entry name" value="MAS20"/>
    <property type="match status" value="1"/>
</dbReference>
<dbReference type="PIRSF" id="PIRSF037707">
    <property type="entry name" value="MAS20_rcpt"/>
    <property type="match status" value="1"/>
</dbReference>
<dbReference type="PRINTS" id="PR01989">
    <property type="entry name" value="EUOM20RECPTR"/>
</dbReference>
<dbReference type="PRINTS" id="PR00351">
    <property type="entry name" value="OM20RECEPTOR"/>
</dbReference>
<dbReference type="SUPFAM" id="SSF47157">
    <property type="entry name" value="Mitochondrial import receptor subunit Tom20"/>
    <property type="match status" value="1"/>
</dbReference>
<keyword id="KW-0472">Membrane</keyword>
<keyword id="KW-0496">Mitochondrion</keyword>
<keyword id="KW-1000">Mitochondrion outer membrane</keyword>
<keyword id="KW-1267">Proteomics identification</keyword>
<keyword id="KW-1185">Reference proteome</keyword>
<keyword id="KW-0812">Transmembrane</keyword>
<keyword id="KW-1133">Transmembrane helix</keyword>
<protein>
    <recommendedName>
        <fullName>TOMM20-like protein 1</fullName>
    </recommendedName>
</protein>
<name>TO20L_HUMAN</name>
<gene>
    <name type="primary">TOMM20L</name>
    <name type="ORF">UNQ9438/PRO34772</name>
</gene>
<comment type="interaction">
    <interactant intactId="EBI-11954062">
        <id>Q6UXN7</id>
    </interactant>
    <interactant intactId="EBI-14240149">
        <id>B3EWG3</id>
        <label>FAM25A</label>
    </interactant>
    <organismsDiffer>false</organismsDiffer>
    <experiments>3</experiments>
</comment>
<comment type="interaction">
    <interactant intactId="EBI-11954062">
        <id>Q6UXN7</id>
    </interactant>
    <interactant intactId="EBI-6929453">
        <id>O43716</id>
        <label>GATC</label>
    </interactant>
    <organismsDiffer>false</organismsDiffer>
    <experiments>3</experiments>
</comment>
<comment type="interaction">
    <interactant intactId="EBI-11954062">
        <id>Q6UXN7</id>
    </interactant>
    <interactant intactId="EBI-373337">
        <id>O76064</id>
        <label>RNF8</label>
    </interactant>
    <organismsDiffer>false</organismsDiffer>
    <experiments>3</experiments>
</comment>
<comment type="interaction">
    <interactant intactId="EBI-11954062">
        <id>Q6UXN7</id>
    </interactant>
    <interactant intactId="EBI-947187">
        <id>Q9UHD9</id>
        <label>UBQLN2</label>
    </interactant>
    <organismsDiffer>false</organismsDiffer>
    <experiments>3</experiments>
</comment>
<comment type="subcellular location">
    <subcellularLocation>
        <location evidence="3">Mitochondrion outer membrane</location>
        <topology evidence="3">Single-pass membrane protein</topology>
    </subcellularLocation>
</comment>
<comment type="similarity">
    <text evidence="3">Belongs to the Tom20 family.</text>
</comment>
<proteinExistence type="evidence at protein level"/>
<accession>Q6UXN7</accession>
<accession>B2RPR0</accession>
<reference key="1">
    <citation type="journal article" date="2003" name="Genome Res.">
        <title>The secreted protein discovery initiative (SPDI), a large-scale effort to identify novel human secreted and transmembrane proteins: a bioinformatics assessment.</title>
        <authorList>
            <person name="Clark H.F."/>
            <person name="Gurney A.L."/>
            <person name="Abaya E."/>
            <person name="Baker K."/>
            <person name="Baldwin D.T."/>
            <person name="Brush J."/>
            <person name="Chen J."/>
            <person name="Chow B."/>
            <person name="Chui C."/>
            <person name="Crowley C."/>
            <person name="Currell B."/>
            <person name="Deuel B."/>
            <person name="Dowd P."/>
            <person name="Eaton D."/>
            <person name="Foster J.S."/>
            <person name="Grimaldi C."/>
            <person name="Gu Q."/>
            <person name="Hass P.E."/>
            <person name="Heldens S."/>
            <person name="Huang A."/>
            <person name="Kim H.S."/>
            <person name="Klimowski L."/>
            <person name="Jin Y."/>
            <person name="Johnson S."/>
            <person name="Lee J."/>
            <person name="Lewis L."/>
            <person name="Liao D."/>
            <person name="Mark M.R."/>
            <person name="Robbie E."/>
            <person name="Sanchez C."/>
            <person name="Schoenfeld J."/>
            <person name="Seshagiri S."/>
            <person name="Simmons L."/>
            <person name="Singh J."/>
            <person name="Smith V."/>
            <person name="Stinson J."/>
            <person name="Vagts A."/>
            <person name="Vandlen R.L."/>
            <person name="Watanabe C."/>
            <person name="Wieand D."/>
            <person name="Woods K."/>
            <person name="Xie M.-H."/>
            <person name="Yansura D.G."/>
            <person name="Yi S."/>
            <person name="Yu G."/>
            <person name="Yuan J."/>
            <person name="Zhang M."/>
            <person name="Zhang Z."/>
            <person name="Goddard A.D."/>
            <person name="Wood W.I."/>
            <person name="Godowski P.J."/>
            <person name="Gray A.M."/>
        </authorList>
    </citation>
    <scope>NUCLEOTIDE SEQUENCE [LARGE SCALE MRNA]</scope>
</reference>
<reference key="2">
    <citation type="submission" date="2005-07" db="EMBL/GenBank/DDBJ databases">
        <authorList>
            <person name="Mural R.J."/>
            <person name="Istrail S."/>
            <person name="Sutton G.G."/>
            <person name="Florea L."/>
            <person name="Halpern A.L."/>
            <person name="Mobarry C.M."/>
            <person name="Lippert R."/>
            <person name="Walenz B."/>
            <person name="Shatkay H."/>
            <person name="Dew I."/>
            <person name="Miller J.R."/>
            <person name="Flanigan M.J."/>
            <person name="Edwards N.J."/>
            <person name="Bolanos R."/>
            <person name="Fasulo D."/>
            <person name="Halldorsson B.V."/>
            <person name="Hannenhalli S."/>
            <person name="Turner R."/>
            <person name="Yooseph S."/>
            <person name="Lu F."/>
            <person name="Nusskern D.R."/>
            <person name="Shue B.C."/>
            <person name="Zheng X.H."/>
            <person name="Zhong F."/>
            <person name="Delcher A.L."/>
            <person name="Huson D.H."/>
            <person name="Kravitz S.A."/>
            <person name="Mouchard L."/>
            <person name="Reinert K."/>
            <person name="Remington K.A."/>
            <person name="Clark A.G."/>
            <person name="Waterman M.S."/>
            <person name="Eichler E.E."/>
            <person name="Adams M.D."/>
            <person name="Hunkapiller M.W."/>
            <person name="Myers E.W."/>
            <person name="Venter J.C."/>
        </authorList>
    </citation>
    <scope>NUCLEOTIDE SEQUENCE [LARGE SCALE GENOMIC DNA]</scope>
</reference>
<reference key="3">
    <citation type="journal article" date="2004" name="Genome Res.">
        <title>The status, quality, and expansion of the NIH full-length cDNA project: the Mammalian Gene Collection (MGC).</title>
        <authorList>
            <consortium name="The MGC Project Team"/>
        </authorList>
    </citation>
    <scope>NUCLEOTIDE SEQUENCE [LARGE SCALE MRNA]</scope>
</reference>
<organism>
    <name type="scientific">Homo sapiens</name>
    <name type="common">Human</name>
    <dbReference type="NCBI Taxonomy" id="9606"/>
    <lineage>
        <taxon>Eukaryota</taxon>
        <taxon>Metazoa</taxon>
        <taxon>Chordata</taxon>
        <taxon>Craniata</taxon>
        <taxon>Vertebrata</taxon>
        <taxon>Euteleostomi</taxon>
        <taxon>Mammalia</taxon>
        <taxon>Eutheria</taxon>
        <taxon>Euarchontoglires</taxon>
        <taxon>Primates</taxon>
        <taxon>Haplorrhini</taxon>
        <taxon>Catarrhini</taxon>
        <taxon>Hominidae</taxon>
        <taxon>Homo</taxon>
    </lineage>
</organism>